<organism>
    <name type="scientific">Oleidesulfovibrio alaskensis (strain ATCC BAA-1058 / DSM 17464 / G20)</name>
    <name type="common">Desulfovibrio alaskensis</name>
    <dbReference type="NCBI Taxonomy" id="207559"/>
    <lineage>
        <taxon>Bacteria</taxon>
        <taxon>Pseudomonadati</taxon>
        <taxon>Thermodesulfobacteriota</taxon>
        <taxon>Desulfovibrionia</taxon>
        <taxon>Desulfovibrionales</taxon>
        <taxon>Desulfovibrionaceae</taxon>
        <taxon>Oleidesulfovibrio</taxon>
    </lineage>
</organism>
<proteinExistence type="inferred from homology"/>
<gene>
    <name evidence="1" type="primary">gmk</name>
    <name type="ordered locus">Dde_2719</name>
</gene>
<feature type="chain" id="PRO_0000266318" description="Guanylate kinase">
    <location>
        <begin position="1"/>
        <end position="206"/>
    </location>
</feature>
<feature type="domain" description="Guanylate kinase-like" evidence="1">
    <location>
        <begin position="7"/>
        <end position="185"/>
    </location>
</feature>
<feature type="binding site" evidence="1">
    <location>
        <begin position="14"/>
        <end position="21"/>
    </location>
    <ligand>
        <name>ATP</name>
        <dbReference type="ChEBI" id="CHEBI:30616"/>
    </ligand>
</feature>
<evidence type="ECO:0000255" key="1">
    <source>
        <dbReference type="HAMAP-Rule" id="MF_00328"/>
    </source>
</evidence>
<name>KGUA_OLEA2</name>
<protein>
    <recommendedName>
        <fullName evidence="1">Guanylate kinase</fullName>
        <ecNumber evidence="1">2.7.4.8</ecNumber>
    </recommendedName>
    <alternativeName>
        <fullName evidence="1">GMP kinase</fullName>
    </alternativeName>
</protein>
<dbReference type="EC" id="2.7.4.8" evidence="1"/>
<dbReference type="EMBL" id="CP000112">
    <property type="protein sequence ID" value="ABB39515.1"/>
    <property type="molecule type" value="Genomic_DNA"/>
</dbReference>
<dbReference type="RefSeq" id="WP_011368541.1">
    <property type="nucleotide sequence ID" value="NC_007519.1"/>
</dbReference>
<dbReference type="SMR" id="Q30XT1"/>
<dbReference type="STRING" id="207559.Dde_2719"/>
<dbReference type="KEGG" id="dde:Dde_2719"/>
<dbReference type="eggNOG" id="COG0194">
    <property type="taxonomic scope" value="Bacteria"/>
</dbReference>
<dbReference type="HOGENOM" id="CLU_001715_1_0_7"/>
<dbReference type="Proteomes" id="UP000002710">
    <property type="component" value="Chromosome"/>
</dbReference>
<dbReference type="GO" id="GO:0005829">
    <property type="term" value="C:cytosol"/>
    <property type="evidence" value="ECO:0007669"/>
    <property type="project" value="TreeGrafter"/>
</dbReference>
<dbReference type="GO" id="GO:0005524">
    <property type="term" value="F:ATP binding"/>
    <property type="evidence" value="ECO:0007669"/>
    <property type="project" value="UniProtKB-UniRule"/>
</dbReference>
<dbReference type="GO" id="GO:0004385">
    <property type="term" value="F:guanylate kinase activity"/>
    <property type="evidence" value="ECO:0007669"/>
    <property type="project" value="UniProtKB-UniRule"/>
</dbReference>
<dbReference type="CDD" id="cd00071">
    <property type="entry name" value="GMPK"/>
    <property type="match status" value="1"/>
</dbReference>
<dbReference type="FunFam" id="3.30.63.10:FF:000002">
    <property type="entry name" value="Guanylate kinase 1"/>
    <property type="match status" value="1"/>
</dbReference>
<dbReference type="Gene3D" id="3.30.63.10">
    <property type="entry name" value="Guanylate Kinase phosphate binding domain"/>
    <property type="match status" value="1"/>
</dbReference>
<dbReference type="Gene3D" id="3.40.50.300">
    <property type="entry name" value="P-loop containing nucleotide triphosphate hydrolases"/>
    <property type="match status" value="1"/>
</dbReference>
<dbReference type="HAMAP" id="MF_00328">
    <property type="entry name" value="Guanylate_kinase"/>
    <property type="match status" value="1"/>
</dbReference>
<dbReference type="InterPro" id="IPR008145">
    <property type="entry name" value="GK/Ca_channel_bsu"/>
</dbReference>
<dbReference type="InterPro" id="IPR008144">
    <property type="entry name" value="Guanylate_kin-like_dom"/>
</dbReference>
<dbReference type="InterPro" id="IPR017665">
    <property type="entry name" value="Guanylate_kinase"/>
</dbReference>
<dbReference type="InterPro" id="IPR020590">
    <property type="entry name" value="Guanylate_kinase_CS"/>
</dbReference>
<dbReference type="InterPro" id="IPR027417">
    <property type="entry name" value="P-loop_NTPase"/>
</dbReference>
<dbReference type="NCBIfam" id="TIGR03263">
    <property type="entry name" value="guanyl_kin"/>
    <property type="match status" value="1"/>
</dbReference>
<dbReference type="PANTHER" id="PTHR23117:SF13">
    <property type="entry name" value="GUANYLATE KINASE"/>
    <property type="match status" value="1"/>
</dbReference>
<dbReference type="PANTHER" id="PTHR23117">
    <property type="entry name" value="GUANYLATE KINASE-RELATED"/>
    <property type="match status" value="1"/>
</dbReference>
<dbReference type="Pfam" id="PF00625">
    <property type="entry name" value="Guanylate_kin"/>
    <property type="match status" value="1"/>
</dbReference>
<dbReference type="SMART" id="SM00072">
    <property type="entry name" value="GuKc"/>
    <property type="match status" value="1"/>
</dbReference>
<dbReference type="SUPFAM" id="SSF52540">
    <property type="entry name" value="P-loop containing nucleoside triphosphate hydrolases"/>
    <property type="match status" value="1"/>
</dbReference>
<dbReference type="PROSITE" id="PS00856">
    <property type="entry name" value="GUANYLATE_KINASE_1"/>
    <property type="match status" value="1"/>
</dbReference>
<dbReference type="PROSITE" id="PS50052">
    <property type="entry name" value="GUANYLATE_KINASE_2"/>
    <property type="match status" value="1"/>
</dbReference>
<keyword id="KW-0067">ATP-binding</keyword>
<keyword id="KW-0963">Cytoplasm</keyword>
<keyword id="KW-0418">Kinase</keyword>
<keyword id="KW-0547">Nucleotide-binding</keyword>
<keyword id="KW-1185">Reference proteome</keyword>
<keyword id="KW-0808">Transferase</keyword>
<comment type="function">
    <text evidence="1">Essential for recycling GMP and indirectly, cGMP.</text>
</comment>
<comment type="catalytic activity">
    <reaction evidence="1">
        <text>GMP + ATP = GDP + ADP</text>
        <dbReference type="Rhea" id="RHEA:20780"/>
        <dbReference type="ChEBI" id="CHEBI:30616"/>
        <dbReference type="ChEBI" id="CHEBI:58115"/>
        <dbReference type="ChEBI" id="CHEBI:58189"/>
        <dbReference type="ChEBI" id="CHEBI:456216"/>
        <dbReference type="EC" id="2.7.4.8"/>
    </reaction>
</comment>
<comment type="subcellular location">
    <subcellularLocation>
        <location evidence="1">Cytoplasm</location>
    </subcellularLocation>
</comment>
<comment type="similarity">
    <text evidence="1">Belongs to the guanylate kinase family.</text>
</comment>
<accession>Q30XT1</accession>
<sequence>MVRPRSGIVLVLCAPSGTGKTTLTRRLLEEFPRFAFSVSYTTRQPRAGEEHGREYNFVDEETFIRLRDEGFFAEWAEVHGNFYGTPLEDTRQLLARGRDVLFDIDVQGAAQLRGSLKQGCYVFILPPSGAELERRLRARGTDPEDTIRRRLANARRELQQAHWFNAWIVNDNLEQAYDELRAAYLAATLSPTCRPELVDELLQDWR</sequence>
<reference key="1">
    <citation type="journal article" date="2011" name="J. Bacteriol.">
        <title>Complete genome sequence and updated annotation of Desulfovibrio alaskensis G20.</title>
        <authorList>
            <person name="Hauser L.J."/>
            <person name="Land M.L."/>
            <person name="Brown S.D."/>
            <person name="Larimer F."/>
            <person name="Keller K.L."/>
            <person name="Rapp-Giles B.J."/>
            <person name="Price M.N."/>
            <person name="Lin M."/>
            <person name="Bruce D.C."/>
            <person name="Detter J.C."/>
            <person name="Tapia R."/>
            <person name="Han C.S."/>
            <person name="Goodwin L.A."/>
            <person name="Cheng J.F."/>
            <person name="Pitluck S."/>
            <person name="Copeland A."/>
            <person name="Lucas S."/>
            <person name="Nolan M."/>
            <person name="Lapidus A.L."/>
            <person name="Palumbo A.V."/>
            <person name="Wall J.D."/>
        </authorList>
    </citation>
    <scope>NUCLEOTIDE SEQUENCE [LARGE SCALE GENOMIC DNA]</scope>
    <source>
        <strain>ATCC BAA-1058 / DSM 17464 / G20</strain>
    </source>
</reference>